<proteinExistence type="inferred from homology"/>
<keyword id="KW-0479">Metal-binding</keyword>
<keyword id="KW-1185">Reference proteome</keyword>
<keyword id="KW-0862">Zinc</keyword>
<keyword id="KW-0863">Zinc-finger</keyword>
<evidence type="ECO:0000255" key="1">
    <source>
        <dbReference type="PROSITE-ProRule" id="PRU00453"/>
    </source>
</evidence>
<evidence type="ECO:0000256" key="2">
    <source>
        <dbReference type="SAM" id="MobiDB-lite"/>
    </source>
</evidence>
<evidence type="ECO:0000305" key="3"/>
<comment type="similarity">
    <text evidence="3">Belongs to the ZNHIT1 family.</text>
</comment>
<sequence>MSDSIIVNIETPQSSKRKSQISKRYRVTSEEDRRNLKEKVISARLESLDDDNEQQPIGSRGDEEDNDYNDDENEIVYTTPVNKKRLFIAREKKKNEKKSMNLNFNDVLEKSYLETFPDHVPTYISVQSKPSIFPPRHFCSICGYIGAYTCKQCSSRYCSIKCFNYHNETRCKGSIYT</sequence>
<organism>
    <name type="scientific">Dictyostelium discoideum</name>
    <name type="common">Social amoeba</name>
    <dbReference type="NCBI Taxonomy" id="44689"/>
    <lineage>
        <taxon>Eukaryota</taxon>
        <taxon>Amoebozoa</taxon>
        <taxon>Evosea</taxon>
        <taxon>Eumycetozoa</taxon>
        <taxon>Dictyostelia</taxon>
        <taxon>Dictyosteliales</taxon>
        <taxon>Dictyosteliaceae</taxon>
        <taxon>Dictyostelium</taxon>
    </lineage>
</organism>
<feature type="chain" id="PRO_0000331381" description="Zinc finger HIT domain-containing protein 1 homolog">
    <location>
        <begin position="1"/>
        <end position="177"/>
    </location>
</feature>
<feature type="zinc finger region" description="HIT-type" evidence="1">
    <location>
        <begin position="139"/>
        <end position="171"/>
    </location>
</feature>
<feature type="region of interest" description="Disordered" evidence="2">
    <location>
        <begin position="1"/>
        <end position="74"/>
    </location>
</feature>
<feature type="compositionally biased region" description="Basic residues" evidence="2">
    <location>
        <begin position="15"/>
        <end position="26"/>
    </location>
</feature>
<feature type="compositionally biased region" description="Basic and acidic residues" evidence="2">
    <location>
        <begin position="27"/>
        <end position="41"/>
    </location>
</feature>
<feature type="compositionally biased region" description="Acidic residues" evidence="2">
    <location>
        <begin position="62"/>
        <end position="74"/>
    </location>
</feature>
<feature type="binding site" evidence="1">
    <location>
        <position position="139"/>
    </location>
    <ligand>
        <name>Zn(2+)</name>
        <dbReference type="ChEBI" id="CHEBI:29105"/>
        <label>1</label>
    </ligand>
</feature>
<feature type="binding site" evidence="1">
    <location>
        <position position="142"/>
    </location>
    <ligand>
        <name>Zn(2+)</name>
        <dbReference type="ChEBI" id="CHEBI:29105"/>
        <label>1</label>
    </ligand>
</feature>
<feature type="binding site" evidence="1">
    <location>
        <position position="150"/>
    </location>
    <ligand>
        <name>Zn(2+)</name>
        <dbReference type="ChEBI" id="CHEBI:29105"/>
        <label>2</label>
    </ligand>
</feature>
<feature type="binding site" evidence="1">
    <location>
        <position position="153"/>
    </location>
    <ligand>
        <name>Zn(2+)</name>
        <dbReference type="ChEBI" id="CHEBI:29105"/>
        <label>2</label>
    </ligand>
</feature>
<feature type="binding site" evidence="1">
    <location>
        <position position="158"/>
    </location>
    <ligand>
        <name>Zn(2+)</name>
        <dbReference type="ChEBI" id="CHEBI:29105"/>
        <label>1</label>
    </ligand>
</feature>
<feature type="binding site" evidence="1">
    <location>
        <position position="162"/>
    </location>
    <ligand>
        <name>Zn(2+)</name>
        <dbReference type="ChEBI" id="CHEBI:29105"/>
        <label>1</label>
    </ligand>
</feature>
<feature type="binding site" evidence="1">
    <location>
        <position position="166"/>
    </location>
    <ligand>
        <name>Zn(2+)</name>
        <dbReference type="ChEBI" id="CHEBI:29105"/>
        <label>2</label>
    </ligand>
</feature>
<feature type="binding site" evidence="1">
    <location>
        <position position="171"/>
    </location>
    <ligand>
        <name>Zn(2+)</name>
        <dbReference type="ChEBI" id="CHEBI:29105"/>
        <label>2</label>
    </ligand>
</feature>
<reference key="1">
    <citation type="journal article" date="2005" name="Nature">
        <title>The genome of the social amoeba Dictyostelium discoideum.</title>
        <authorList>
            <person name="Eichinger L."/>
            <person name="Pachebat J.A."/>
            <person name="Gloeckner G."/>
            <person name="Rajandream M.A."/>
            <person name="Sucgang R."/>
            <person name="Berriman M."/>
            <person name="Song J."/>
            <person name="Olsen R."/>
            <person name="Szafranski K."/>
            <person name="Xu Q."/>
            <person name="Tunggal B."/>
            <person name="Kummerfeld S."/>
            <person name="Madera M."/>
            <person name="Konfortov B.A."/>
            <person name="Rivero F."/>
            <person name="Bankier A.T."/>
            <person name="Lehmann R."/>
            <person name="Hamlin N."/>
            <person name="Davies R."/>
            <person name="Gaudet P."/>
            <person name="Fey P."/>
            <person name="Pilcher K."/>
            <person name="Chen G."/>
            <person name="Saunders D."/>
            <person name="Sodergren E.J."/>
            <person name="Davis P."/>
            <person name="Kerhornou A."/>
            <person name="Nie X."/>
            <person name="Hall N."/>
            <person name="Anjard C."/>
            <person name="Hemphill L."/>
            <person name="Bason N."/>
            <person name="Farbrother P."/>
            <person name="Desany B."/>
            <person name="Just E."/>
            <person name="Morio T."/>
            <person name="Rost R."/>
            <person name="Churcher C.M."/>
            <person name="Cooper J."/>
            <person name="Haydock S."/>
            <person name="van Driessche N."/>
            <person name="Cronin A."/>
            <person name="Goodhead I."/>
            <person name="Muzny D.M."/>
            <person name="Mourier T."/>
            <person name="Pain A."/>
            <person name="Lu M."/>
            <person name="Harper D."/>
            <person name="Lindsay R."/>
            <person name="Hauser H."/>
            <person name="James K.D."/>
            <person name="Quiles M."/>
            <person name="Madan Babu M."/>
            <person name="Saito T."/>
            <person name="Buchrieser C."/>
            <person name="Wardroper A."/>
            <person name="Felder M."/>
            <person name="Thangavelu M."/>
            <person name="Johnson D."/>
            <person name="Knights A."/>
            <person name="Loulseged H."/>
            <person name="Mungall K.L."/>
            <person name="Oliver K."/>
            <person name="Price C."/>
            <person name="Quail M.A."/>
            <person name="Urushihara H."/>
            <person name="Hernandez J."/>
            <person name="Rabbinowitsch E."/>
            <person name="Steffen D."/>
            <person name="Sanders M."/>
            <person name="Ma J."/>
            <person name="Kohara Y."/>
            <person name="Sharp S."/>
            <person name="Simmonds M.N."/>
            <person name="Spiegler S."/>
            <person name="Tivey A."/>
            <person name="Sugano S."/>
            <person name="White B."/>
            <person name="Walker D."/>
            <person name="Woodward J.R."/>
            <person name="Winckler T."/>
            <person name="Tanaka Y."/>
            <person name="Shaulsky G."/>
            <person name="Schleicher M."/>
            <person name="Weinstock G.M."/>
            <person name="Rosenthal A."/>
            <person name="Cox E.C."/>
            <person name="Chisholm R.L."/>
            <person name="Gibbs R.A."/>
            <person name="Loomis W.F."/>
            <person name="Platzer M."/>
            <person name="Kay R.R."/>
            <person name="Williams J.G."/>
            <person name="Dear P.H."/>
            <person name="Noegel A.A."/>
            <person name="Barrell B.G."/>
            <person name="Kuspa A."/>
        </authorList>
    </citation>
    <scope>NUCLEOTIDE SEQUENCE [LARGE SCALE GENOMIC DNA]</scope>
    <source>
        <strain>AX4</strain>
    </source>
</reference>
<protein>
    <recommendedName>
        <fullName>Zinc finger HIT domain-containing protein 1 homolog</fullName>
    </recommendedName>
</protein>
<dbReference type="EMBL" id="AAFI02000073">
    <property type="protein sequence ID" value="EAL64944.1"/>
    <property type="molecule type" value="Genomic_DNA"/>
</dbReference>
<dbReference type="RefSeq" id="XP_639957.1">
    <property type="nucleotide sequence ID" value="XM_634865.1"/>
</dbReference>
<dbReference type="FunCoup" id="Q54NW0">
    <property type="interactions" value="25"/>
</dbReference>
<dbReference type="STRING" id="44689.Q54NW0"/>
<dbReference type="PaxDb" id="44689-DDB0186282"/>
<dbReference type="EnsemblProtists" id="EAL64944">
    <property type="protein sequence ID" value="EAL64944"/>
    <property type="gene ID" value="DDB_G0284961"/>
</dbReference>
<dbReference type="GeneID" id="8624869"/>
<dbReference type="KEGG" id="ddi:DDB_G0284961"/>
<dbReference type="dictyBase" id="DDB_G0284961"/>
<dbReference type="VEuPathDB" id="AmoebaDB:DDB_G0284961"/>
<dbReference type="eggNOG" id="KOG3362">
    <property type="taxonomic scope" value="Eukaryota"/>
</dbReference>
<dbReference type="HOGENOM" id="CLU_106918_0_1_1"/>
<dbReference type="InParanoid" id="Q54NW0"/>
<dbReference type="OMA" id="YHNETRC"/>
<dbReference type="PhylomeDB" id="Q54NW0"/>
<dbReference type="PRO" id="PR:Q54NW0"/>
<dbReference type="Proteomes" id="UP000002195">
    <property type="component" value="Chromosome 4"/>
</dbReference>
<dbReference type="GO" id="GO:0000812">
    <property type="term" value="C:Swr1 complex"/>
    <property type="evidence" value="ECO:0000318"/>
    <property type="project" value="GO_Central"/>
</dbReference>
<dbReference type="GO" id="GO:0031491">
    <property type="term" value="F:nucleosome binding"/>
    <property type="evidence" value="ECO:0000318"/>
    <property type="project" value="GO_Central"/>
</dbReference>
<dbReference type="GO" id="GO:0008270">
    <property type="term" value="F:zinc ion binding"/>
    <property type="evidence" value="ECO:0007669"/>
    <property type="project" value="UniProtKB-KW"/>
</dbReference>
<dbReference type="GO" id="GO:0006338">
    <property type="term" value="P:chromatin remodeling"/>
    <property type="evidence" value="ECO:0007669"/>
    <property type="project" value="InterPro"/>
</dbReference>
<dbReference type="CDD" id="cd21437">
    <property type="entry name" value="zf-HIT_ZNHIT1_like"/>
    <property type="match status" value="1"/>
</dbReference>
<dbReference type="InterPro" id="IPR039723">
    <property type="entry name" value="Vps71/ZNHIT1"/>
</dbReference>
<dbReference type="InterPro" id="IPR007529">
    <property type="entry name" value="Znf_HIT"/>
</dbReference>
<dbReference type="PANTHER" id="PTHR13093">
    <property type="entry name" value="ZINC FINGER HIT DOMAIN CONTAINING PROTEIN 1"/>
    <property type="match status" value="1"/>
</dbReference>
<dbReference type="Pfam" id="PF04438">
    <property type="entry name" value="zf-HIT"/>
    <property type="match status" value="1"/>
</dbReference>
<dbReference type="SUPFAM" id="SSF144232">
    <property type="entry name" value="HIT/MYND zinc finger-like"/>
    <property type="match status" value="1"/>
</dbReference>
<dbReference type="PROSITE" id="PS51083">
    <property type="entry name" value="ZF_HIT"/>
    <property type="match status" value="1"/>
</dbReference>
<gene>
    <name type="primary">znhit1</name>
    <name type="ORF">DDB_G0284961</name>
</gene>
<name>ZNHI1_DICDI</name>
<accession>Q54NW0</accession>